<keyword id="KW-0067">ATP-binding</keyword>
<keyword id="KW-0143">Chaperone</keyword>
<keyword id="KW-0963">Cytoplasm</keyword>
<keyword id="KW-0413">Isomerase</keyword>
<keyword id="KW-0547">Nucleotide-binding</keyword>
<keyword id="KW-1185">Reference proteome</keyword>
<comment type="function">
    <text evidence="1">Together with its co-chaperonin GroES, plays an essential role in assisting protein folding. The GroEL-GroES system forms a nano-cage that allows encapsulation of the non-native substrate proteins and provides a physical environment optimized to promote and accelerate protein folding.</text>
</comment>
<comment type="catalytic activity">
    <reaction evidence="1">
        <text>ATP + H2O + a folded polypeptide = ADP + phosphate + an unfolded polypeptide.</text>
        <dbReference type="EC" id="5.6.1.7"/>
    </reaction>
</comment>
<comment type="subunit">
    <text evidence="1">Forms a cylinder of 14 subunits composed of two heptameric rings stacked back-to-back. Interacts with the co-chaperonin GroES.</text>
</comment>
<comment type="subcellular location">
    <subcellularLocation>
        <location evidence="1">Cytoplasm</location>
    </subcellularLocation>
</comment>
<comment type="similarity">
    <text evidence="1">Belongs to the chaperonin (HSP60) family.</text>
</comment>
<protein>
    <recommendedName>
        <fullName evidence="1">Chaperonin GroEL</fullName>
        <ecNumber evidence="1">5.6.1.7</ecNumber>
    </recommendedName>
    <alternativeName>
        <fullName evidence="1">60 kDa chaperonin</fullName>
    </alternativeName>
    <alternativeName>
        <fullName evidence="1">Chaperonin-60</fullName>
        <shortName evidence="1">Cpn60</shortName>
    </alternativeName>
</protein>
<dbReference type="EC" id="5.6.1.7" evidence="1"/>
<dbReference type="EMBL" id="CP000127">
    <property type="protein sequence ID" value="ABA59367.1"/>
    <property type="molecule type" value="Genomic_DNA"/>
</dbReference>
<dbReference type="RefSeq" id="WP_002813030.1">
    <property type="nucleotide sequence ID" value="NC_007484.1"/>
</dbReference>
<dbReference type="SMR" id="Q3J729"/>
<dbReference type="FunCoup" id="Q3J729">
    <property type="interactions" value="731"/>
</dbReference>
<dbReference type="STRING" id="323261.Noc_2921"/>
<dbReference type="KEGG" id="noc:Noc_2921"/>
<dbReference type="eggNOG" id="COG0459">
    <property type="taxonomic scope" value="Bacteria"/>
</dbReference>
<dbReference type="HOGENOM" id="CLU_016503_3_0_6"/>
<dbReference type="InParanoid" id="Q3J729"/>
<dbReference type="Proteomes" id="UP000006838">
    <property type="component" value="Chromosome"/>
</dbReference>
<dbReference type="GO" id="GO:0005737">
    <property type="term" value="C:cytoplasm"/>
    <property type="evidence" value="ECO:0007669"/>
    <property type="project" value="UniProtKB-SubCell"/>
</dbReference>
<dbReference type="GO" id="GO:0005524">
    <property type="term" value="F:ATP binding"/>
    <property type="evidence" value="ECO:0007669"/>
    <property type="project" value="UniProtKB-UniRule"/>
</dbReference>
<dbReference type="GO" id="GO:0140662">
    <property type="term" value="F:ATP-dependent protein folding chaperone"/>
    <property type="evidence" value="ECO:0007669"/>
    <property type="project" value="InterPro"/>
</dbReference>
<dbReference type="GO" id="GO:0016853">
    <property type="term" value="F:isomerase activity"/>
    <property type="evidence" value="ECO:0007669"/>
    <property type="project" value="UniProtKB-KW"/>
</dbReference>
<dbReference type="GO" id="GO:0051082">
    <property type="term" value="F:unfolded protein binding"/>
    <property type="evidence" value="ECO:0007669"/>
    <property type="project" value="UniProtKB-UniRule"/>
</dbReference>
<dbReference type="GO" id="GO:0042026">
    <property type="term" value="P:protein refolding"/>
    <property type="evidence" value="ECO:0007669"/>
    <property type="project" value="UniProtKB-UniRule"/>
</dbReference>
<dbReference type="CDD" id="cd03344">
    <property type="entry name" value="GroEL"/>
    <property type="match status" value="1"/>
</dbReference>
<dbReference type="FunFam" id="1.10.560.10:FF:000001">
    <property type="entry name" value="60 kDa chaperonin"/>
    <property type="match status" value="1"/>
</dbReference>
<dbReference type="FunFam" id="3.50.7.10:FF:000001">
    <property type="entry name" value="60 kDa chaperonin"/>
    <property type="match status" value="1"/>
</dbReference>
<dbReference type="Gene3D" id="3.50.7.10">
    <property type="entry name" value="GroEL"/>
    <property type="match status" value="1"/>
</dbReference>
<dbReference type="Gene3D" id="1.10.560.10">
    <property type="entry name" value="GroEL-like equatorial domain"/>
    <property type="match status" value="1"/>
</dbReference>
<dbReference type="Gene3D" id="3.30.260.10">
    <property type="entry name" value="TCP-1-like chaperonin intermediate domain"/>
    <property type="match status" value="1"/>
</dbReference>
<dbReference type="HAMAP" id="MF_00600">
    <property type="entry name" value="CH60"/>
    <property type="match status" value="1"/>
</dbReference>
<dbReference type="InterPro" id="IPR018370">
    <property type="entry name" value="Chaperonin_Cpn60_CS"/>
</dbReference>
<dbReference type="InterPro" id="IPR001844">
    <property type="entry name" value="Cpn60/GroEL"/>
</dbReference>
<dbReference type="InterPro" id="IPR002423">
    <property type="entry name" value="Cpn60/GroEL/TCP-1"/>
</dbReference>
<dbReference type="InterPro" id="IPR027409">
    <property type="entry name" value="GroEL-like_apical_dom_sf"/>
</dbReference>
<dbReference type="InterPro" id="IPR027413">
    <property type="entry name" value="GROEL-like_equatorial_sf"/>
</dbReference>
<dbReference type="InterPro" id="IPR027410">
    <property type="entry name" value="TCP-1-like_intermed_sf"/>
</dbReference>
<dbReference type="NCBIfam" id="TIGR02348">
    <property type="entry name" value="GroEL"/>
    <property type="match status" value="1"/>
</dbReference>
<dbReference type="NCBIfam" id="NF000592">
    <property type="entry name" value="PRK00013.1"/>
    <property type="match status" value="1"/>
</dbReference>
<dbReference type="NCBIfam" id="NF009487">
    <property type="entry name" value="PRK12849.1"/>
    <property type="match status" value="1"/>
</dbReference>
<dbReference type="NCBIfam" id="NF009488">
    <property type="entry name" value="PRK12850.1"/>
    <property type="match status" value="1"/>
</dbReference>
<dbReference type="NCBIfam" id="NF009489">
    <property type="entry name" value="PRK12851.1"/>
    <property type="match status" value="1"/>
</dbReference>
<dbReference type="PANTHER" id="PTHR45633">
    <property type="entry name" value="60 KDA HEAT SHOCK PROTEIN, MITOCHONDRIAL"/>
    <property type="match status" value="1"/>
</dbReference>
<dbReference type="Pfam" id="PF00118">
    <property type="entry name" value="Cpn60_TCP1"/>
    <property type="match status" value="1"/>
</dbReference>
<dbReference type="PRINTS" id="PR00298">
    <property type="entry name" value="CHAPERONIN60"/>
</dbReference>
<dbReference type="SUPFAM" id="SSF52029">
    <property type="entry name" value="GroEL apical domain-like"/>
    <property type="match status" value="1"/>
</dbReference>
<dbReference type="SUPFAM" id="SSF48592">
    <property type="entry name" value="GroEL equatorial domain-like"/>
    <property type="match status" value="1"/>
</dbReference>
<dbReference type="SUPFAM" id="SSF54849">
    <property type="entry name" value="GroEL-intermediate domain like"/>
    <property type="match status" value="1"/>
</dbReference>
<dbReference type="PROSITE" id="PS00296">
    <property type="entry name" value="CHAPERONINS_CPN60"/>
    <property type="match status" value="1"/>
</dbReference>
<evidence type="ECO:0000255" key="1">
    <source>
        <dbReference type="HAMAP-Rule" id="MF_00600"/>
    </source>
</evidence>
<proteinExistence type="inferred from homology"/>
<gene>
    <name evidence="1" type="primary">groEL</name>
    <name evidence="1" type="synonym">groL</name>
    <name type="ordered locus">Noc_2921</name>
</gene>
<accession>Q3J729</accession>
<sequence length="554" mass="58284">MAAKDVRFSEDARHRMMHGVNVLADAVRVTLGPRGRNVVLEKSFGAPTITKDGVSVAKEIELKDRFENMGAQMVKEVASQTSDVAGDGTTTATVLAQSILREGMKAVAAGMNPMDLKRGVDKAVVAAVEELKKLSKPCEDSKAIGQVGTISANAEESVGKIIAEAMDKVGKEGVITVEEGSGLDNELEVVEGMQFDRGYLSPYFITDQQSMAADLDDPYILIHDKKISNIRDLLPVLESVAKAGKPLLVISEDVEGEALATLVVNTIRGIVKVCAVKAPGFGDRRKAMLEDIAVLTGGTVISEEVGLSLDKVTLDDLGRAKKITVNKENTTIVDGAGSADDIKARVEQVRIQIEEATSDYDKEKLQERVAKLAGGVAVIKVGAATEMEMKEKKARVEDALHATRAAVEEGVVPGGGVALIRALLGIKDLKGANHDQDVGINIARRAMEEPLRQIVNNSGEEASVIVNQIKGGEGNYGYNAATGEFGDMIAMGILDPTKVSRTALQNAASVAGLMITTEAMIAEAPKDEEASPGGAPGMGGGMGGMGGMGDMGMM</sequence>
<feature type="chain" id="PRO_0000256939" description="Chaperonin GroEL">
    <location>
        <begin position="1"/>
        <end position="554"/>
    </location>
</feature>
<feature type="binding site" evidence="1">
    <location>
        <begin position="30"/>
        <end position="33"/>
    </location>
    <ligand>
        <name>ATP</name>
        <dbReference type="ChEBI" id="CHEBI:30616"/>
    </ligand>
</feature>
<feature type="binding site" evidence="1">
    <location>
        <position position="51"/>
    </location>
    <ligand>
        <name>ATP</name>
        <dbReference type="ChEBI" id="CHEBI:30616"/>
    </ligand>
</feature>
<feature type="binding site" evidence="1">
    <location>
        <begin position="87"/>
        <end position="91"/>
    </location>
    <ligand>
        <name>ATP</name>
        <dbReference type="ChEBI" id="CHEBI:30616"/>
    </ligand>
</feature>
<feature type="binding site" evidence="1">
    <location>
        <position position="415"/>
    </location>
    <ligand>
        <name>ATP</name>
        <dbReference type="ChEBI" id="CHEBI:30616"/>
    </ligand>
</feature>
<feature type="binding site" evidence="1">
    <location>
        <begin position="479"/>
        <end position="481"/>
    </location>
    <ligand>
        <name>ATP</name>
        <dbReference type="ChEBI" id="CHEBI:30616"/>
    </ligand>
</feature>
<feature type="binding site" evidence="1">
    <location>
        <position position="495"/>
    </location>
    <ligand>
        <name>ATP</name>
        <dbReference type="ChEBI" id="CHEBI:30616"/>
    </ligand>
</feature>
<organism>
    <name type="scientific">Nitrosococcus oceani (strain ATCC 19707 / BCRC 17464 / JCM 30415 / NCIMB 11848 / C-107)</name>
    <dbReference type="NCBI Taxonomy" id="323261"/>
    <lineage>
        <taxon>Bacteria</taxon>
        <taxon>Pseudomonadati</taxon>
        <taxon>Pseudomonadota</taxon>
        <taxon>Gammaproteobacteria</taxon>
        <taxon>Chromatiales</taxon>
        <taxon>Chromatiaceae</taxon>
        <taxon>Nitrosococcus</taxon>
    </lineage>
</organism>
<reference key="1">
    <citation type="journal article" date="2006" name="Appl. Environ. Microbiol.">
        <title>Complete genome sequence of the marine, chemolithoautotrophic, ammonia-oxidizing bacterium Nitrosococcus oceani ATCC 19707.</title>
        <authorList>
            <person name="Klotz M.G."/>
            <person name="Arp D.J."/>
            <person name="Chain P.S.G."/>
            <person name="El-Sheikh A.F."/>
            <person name="Hauser L.J."/>
            <person name="Hommes N.G."/>
            <person name="Larimer F.W."/>
            <person name="Malfatti S.A."/>
            <person name="Norton J.M."/>
            <person name="Poret-Peterson A.T."/>
            <person name="Vergez L.M."/>
            <person name="Ward B.B."/>
        </authorList>
    </citation>
    <scope>NUCLEOTIDE SEQUENCE [LARGE SCALE GENOMIC DNA]</scope>
    <source>
        <strain>ATCC 19707 / BCRC 17464 / JCM 30415 / NCIMB 11848 / C-107</strain>
    </source>
</reference>
<name>CH60_NITOC</name>